<protein>
    <recommendedName>
        <fullName>Putative S-adenosyl-L-methionine-dependent methyltransferase MSMEG_1480/MSMEI_1444</fullName>
        <ecNumber>2.1.1.-</ecNumber>
    </recommendedName>
</protein>
<evidence type="ECO:0000250" key="1"/>
<evidence type="ECO:0000305" key="2"/>
<accession>A0QSH4</accession>
<accession>I7FYA3</accession>
<dbReference type="EC" id="2.1.1.-"/>
<dbReference type="EMBL" id="CP000480">
    <property type="protein sequence ID" value="ABK71545.1"/>
    <property type="molecule type" value="Genomic_DNA"/>
</dbReference>
<dbReference type="EMBL" id="CP001663">
    <property type="protein sequence ID" value="AFP37917.1"/>
    <property type="molecule type" value="Genomic_DNA"/>
</dbReference>
<dbReference type="RefSeq" id="WP_003892867.1">
    <property type="nucleotide sequence ID" value="NZ_SIJM01000016.1"/>
</dbReference>
<dbReference type="RefSeq" id="YP_885862.1">
    <property type="nucleotide sequence ID" value="NC_008596.1"/>
</dbReference>
<dbReference type="SMR" id="A0QSH4"/>
<dbReference type="STRING" id="246196.MSMEG_1480"/>
<dbReference type="PaxDb" id="246196-MSMEI_1444"/>
<dbReference type="KEGG" id="msb:LJ00_07395"/>
<dbReference type="KEGG" id="msg:MSMEI_1444"/>
<dbReference type="KEGG" id="msm:MSMEG_1480"/>
<dbReference type="PATRIC" id="fig|246196.19.peg.1465"/>
<dbReference type="eggNOG" id="COG3315">
    <property type="taxonomic scope" value="Bacteria"/>
</dbReference>
<dbReference type="OrthoDB" id="9806164at2"/>
<dbReference type="Proteomes" id="UP000000757">
    <property type="component" value="Chromosome"/>
</dbReference>
<dbReference type="Proteomes" id="UP000006158">
    <property type="component" value="Chromosome"/>
</dbReference>
<dbReference type="GO" id="GO:0008168">
    <property type="term" value="F:methyltransferase activity"/>
    <property type="evidence" value="ECO:0007669"/>
    <property type="project" value="UniProtKB-KW"/>
</dbReference>
<dbReference type="GO" id="GO:0032259">
    <property type="term" value="P:methylation"/>
    <property type="evidence" value="ECO:0007669"/>
    <property type="project" value="UniProtKB-KW"/>
</dbReference>
<dbReference type="Gene3D" id="3.40.50.150">
    <property type="entry name" value="Vaccinia Virus protein VP39"/>
    <property type="match status" value="1"/>
</dbReference>
<dbReference type="InterPro" id="IPR007213">
    <property type="entry name" value="Ppm1/Ppm2/Tcmp"/>
</dbReference>
<dbReference type="InterPro" id="IPR029063">
    <property type="entry name" value="SAM-dependent_MTases_sf"/>
</dbReference>
<dbReference type="InterPro" id="IPR011610">
    <property type="entry name" value="SAM_mthyl_Trfase_ML2640-like"/>
</dbReference>
<dbReference type="NCBIfam" id="TIGR00027">
    <property type="entry name" value="mthyl_TIGR00027"/>
    <property type="match status" value="1"/>
</dbReference>
<dbReference type="PANTHER" id="PTHR43619">
    <property type="entry name" value="S-ADENOSYL-L-METHIONINE-DEPENDENT METHYLTRANSFERASE YKTD-RELATED"/>
    <property type="match status" value="1"/>
</dbReference>
<dbReference type="PANTHER" id="PTHR43619:SF2">
    <property type="entry name" value="S-ADENOSYL-L-METHIONINE-DEPENDENT METHYLTRANSFERASES SUPERFAMILY PROTEIN"/>
    <property type="match status" value="1"/>
</dbReference>
<dbReference type="Pfam" id="PF04072">
    <property type="entry name" value="LCM"/>
    <property type="match status" value="1"/>
</dbReference>
<dbReference type="SUPFAM" id="SSF53335">
    <property type="entry name" value="S-adenosyl-L-methionine-dependent methyltransferases"/>
    <property type="match status" value="1"/>
</dbReference>
<keyword id="KW-0489">Methyltransferase</keyword>
<keyword id="KW-1185">Reference proteome</keyword>
<keyword id="KW-0949">S-adenosyl-L-methionine</keyword>
<keyword id="KW-0808">Transferase</keyword>
<organism>
    <name type="scientific">Mycolicibacterium smegmatis (strain ATCC 700084 / mc(2)155)</name>
    <name type="common">Mycobacterium smegmatis</name>
    <dbReference type="NCBI Taxonomy" id="246196"/>
    <lineage>
        <taxon>Bacteria</taxon>
        <taxon>Bacillati</taxon>
        <taxon>Actinomycetota</taxon>
        <taxon>Actinomycetes</taxon>
        <taxon>Mycobacteriales</taxon>
        <taxon>Mycobacteriaceae</taxon>
        <taxon>Mycolicibacterium</taxon>
    </lineage>
</organism>
<gene>
    <name type="ordered locus">MSMEG_1480</name>
    <name type="ordered locus">MSMEI_1444</name>
</gene>
<name>Y1480_MYCS2</name>
<feature type="chain" id="PRO_0000361196" description="Putative S-adenosyl-L-methionine-dependent methyltransferase MSMEG_1480/MSMEI_1444">
    <location>
        <begin position="1"/>
        <end position="298"/>
    </location>
</feature>
<feature type="binding site" evidence="1">
    <location>
        <position position="127"/>
    </location>
    <ligand>
        <name>S-adenosyl-L-methionine</name>
        <dbReference type="ChEBI" id="CHEBI:59789"/>
    </ligand>
</feature>
<feature type="binding site" evidence="1">
    <location>
        <begin position="156"/>
        <end position="157"/>
    </location>
    <ligand>
        <name>S-adenosyl-L-methionine</name>
        <dbReference type="ChEBI" id="CHEBI:59789"/>
    </ligand>
</feature>
<comment type="function">
    <text evidence="1">Exhibits S-adenosyl-L-methionine-dependent methyltransferase activity.</text>
</comment>
<comment type="similarity">
    <text evidence="2">Belongs to the UPF0677 family.</text>
</comment>
<proteinExistence type="inferred from homology"/>
<reference key="1">
    <citation type="submission" date="2006-10" db="EMBL/GenBank/DDBJ databases">
        <authorList>
            <person name="Fleischmann R.D."/>
            <person name="Dodson R.J."/>
            <person name="Haft D.H."/>
            <person name="Merkel J.S."/>
            <person name="Nelson W.C."/>
            <person name="Fraser C.M."/>
        </authorList>
    </citation>
    <scope>NUCLEOTIDE SEQUENCE [LARGE SCALE GENOMIC DNA]</scope>
    <source>
        <strain>ATCC 700084 / mc(2)155</strain>
    </source>
</reference>
<reference key="2">
    <citation type="journal article" date="2007" name="Genome Biol.">
        <title>Interrupted coding sequences in Mycobacterium smegmatis: authentic mutations or sequencing errors?</title>
        <authorList>
            <person name="Deshayes C."/>
            <person name="Perrodou E."/>
            <person name="Gallien S."/>
            <person name="Euphrasie D."/>
            <person name="Schaeffer C."/>
            <person name="Van-Dorsselaer A."/>
            <person name="Poch O."/>
            <person name="Lecompte O."/>
            <person name="Reyrat J.-M."/>
        </authorList>
    </citation>
    <scope>NUCLEOTIDE SEQUENCE [LARGE SCALE GENOMIC DNA]</scope>
    <source>
        <strain>ATCC 700084 / mc(2)155</strain>
    </source>
</reference>
<reference key="3">
    <citation type="journal article" date="2009" name="Genome Res.">
        <title>Ortho-proteogenomics: multiple proteomes investigation through orthology and a new MS-based protocol.</title>
        <authorList>
            <person name="Gallien S."/>
            <person name="Perrodou E."/>
            <person name="Carapito C."/>
            <person name="Deshayes C."/>
            <person name="Reyrat J.-M."/>
            <person name="Van Dorsselaer A."/>
            <person name="Poch O."/>
            <person name="Schaeffer C."/>
            <person name="Lecompte O."/>
        </authorList>
    </citation>
    <scope>NUCLEOTIDE SEQUENCE [LARGE SCALE GENOMIC DNA]</scope>
    <source>
        <strain>ATCC 700084 / mc(2)155</strain>
    </source>
</reference>
<sequence length="298" mass="32377">MTRTDGDTWDLATSVGSTATGVAAMRALATRQPDPLIDDPYADALVKAVGLEHCIALADGETCVEGDPMLDLNRMCEQIAVRTRYFDELFIAAGADGVRQAVILASGLDTRAYRLDWPAGTVVFEVDQPQVIEFKTRTLADLGAQPTAERRTVAVDLRDDWPAALRDAGFDPAEPTAWIAEGLLIYLPAEAQDRLLDNITALSAPGSRLATEHMDHRILAEGAGKRIGEWSRRVGSSLDIADLFYTGERNTAGDYLRGLGWQVTVRPSKEAYADHGFELPEEMAELSGDSGYLSAHLK</sequence>